<reference key="1">
    <citation type="journal article" date="2004" name="Nature">
        <title>Genome evolution in yeasts.</title>
        <authorList>
            <person name="Dujon B."/>
            <person name="Sherman D."/>
            <person name="Fischer G."/>
            <person name="Durrens P."/>
            <person name="Casaregola S."/>
            <person name="Lafontaine I."/>
            <person name="de Montigny J."/>
            <person name="Marck C."/>
            <person name="Neuveglise C."/>
            <person name="Talla E."/>
            <person name="Goffard N."/>
            <person name="Frangeul L."/>
            <person name="Aigle M."/>
            <person name="Anthouard V."/>
            <person name="Babour A."/>
            <person name="Barbe V."/>
            <person name="Barnay S."/>
            <person name="Blanchin S."/>
            <person name="Beckerich J.-M."/>
            <person name="Beyne E."/>
            <person name="Bleykasten C."/>
            <person name="Boisrame A."/>
            <person name="Boyer J."/>
            <person name="Cattolico L."/>
            <person name="Confanioleri F."/>
            <person name="de Daruvar A."/>
            <person name="Despons L."/>
            <person name="Fabre E."/>
            <person name="Fairhead C."/>
            <person name="Ferry-Dumazet H."/>
            <person name="Groppi A."/>
            <person name="Hantraye F."/>
            <person name="Hennequin C."/>
            <person name="Jauniaux N."/>
            <person name="Joyet P."/>
            <person name="Kachouri R."/>
            <person name="Kerrest A."/>
            <person name="Koszul R."/>
            <person name="Lemaire M."/>
            <person name="Lesur I."/>
            <person name="Ma L."/>
            <person name="Muller H."/>
            <person name="Nicaud J.-M."/>
            <person name="Nikolski M."/>
            <person name="Oztas S."/>
            <person name="Ozier-Kalogeropoulos O."/>
            <person name="Pellenz S."/>
            <person name="Potier S."/>
            <person name="Richard G.-F."/>
            <person name="Straub M.-L."/>
            <person name="Suleau A."/>
            <person name="Swennen D."/>
            <person name="Tekaia F."/>
            <person name="Wesolowski-Louvel M."/>
            <person name="Westhof E."/>
            <person name="Wirth B."/>
            <person name="Zeniou-Meyer M."/>
            <person name="Zivanovic Y."/>
            <person name="Bolotin-Fukuhara M."/>
            <person name="Thierry A."/>
            <person name="Bouchier C."/>
            <person name="Caudron B."/>
            <person name="Scarpelli C."/>
            <person name="Gaillardin C."/>
            <person name="Weissenbach J."/>
            <person name="Wincker P."/>
            <person name="Souciet J.-L."/>
        </authorList>
    </citation>
    <scope>NUCLEOTIDE SEQUENCE [LARGE SCALE GENOMIC DNA]</scope>
    <source>
        <strain>ATCC 2001 / BCRC 20586 / JCM 3761 / NBRC 0622 / NRRL Y-65 / CBS 138</strain>
    </source>
</reference>
<evidence type="ECO:0000250" key="1"/>
<evidence type="ECO:0000255" key="2"/>
<evidence type="ECO:0000255" key="3">
    <source>
        <dbReference type="PROSITE-ProRule" id="PRU00277"/>
    </source>
</evidence>
<evidence type="ECO:0000305" key="4"/>
<sequence length="136" mass="14777">MLSQIWILFTFMVCVIASKSKSDGLKFEITKKIPISKCKLKALPGDMVSVHYTGSLAENGKVFDSSLRRNEPIQFKLGAGQVIAGWEQGITGMCLGEKRTLHIPPELAYGSRGAGGVIPPNAVLDFDVELVDIARN</sequence>
<dbReference type="EC" id="5.2.1.8"/>
<dbReference type="EMBL" id="CR380954">
    <property type="protein sequence ID" value="CAG59806.1"/>
    <property type="molecule type" value="Genomic_DNA"/>
</dbReference>
<dbReference type="RefSeq" id="XP_446873.1">
    <property type="nucleotide sequence ID" value="XM_446873.1"/>
</dbReference>
<dbReference type="SMR" id="Q6FSC1"/>
<dbReference type="FunCoup" id="Q6FSC1">
    <property type="interactions" value="598"/>
</dbReference>
<dbReference type="STRING" id="284593.Q6FSC1"/>
<dbReference type="EnsemblFungi" id="CAGL0H01705g-T">
    <property type="protein sequence ID" value="CAGL0H01705g-T-p1"/>
    <property type="gene ID" value="CAGL0H01705g"/>
</dbReference>
<dbReference type="KEGG" id="cgr:2888506"/>
<dbReference type="CGD" id="CAL0131772">
    <property type="gene designation" value="CAGL0H01705g"/>
</dbReference>
<dbReference type="VEuPathDB" id="FungiDB:B1J91_H01705g"/>
<dbReference type="VEuPathDB" id="FungiDB:CAGL0H01705g"/>
<dbReference type="eggNOG" id="KOG0549">
    <property type="taxonomic scope" value="Eukaryota"/>
</dbReference>
<dbReference type="HOGENOM" id="CLU_013615_8_2_1"/>
<dbReference type="InParanoid" id="Q6FSC1"/>
<dbReference type="OMA" id="VHMHYTG"/>
<dbReference type="Proteomes" id="UP000002428">
    <property type="component" value="Chromosome H"/>
</dbReference>
<dbReference type="GO" id="GO:0005783">
    <property type="term" value="C:endoplasmic reticulum"/>
    <property type="evidence" value="ECO:0007669"/>
    <property type="project" value="UniProtKB-SubCell"/>
</dbReference>
<dbReference type="GO" id="GO:0003755">
    <property type="term" value="F:peptidyl-prolyl cis-trans isomerase activity"/>
    <property type="evidence" value="ECO:0007669"/>
    <property type="project" value="UniProtKB-KW"/>
</dbReference>
<dbReference type="GO" id="GO:0061077">
    <property type="term" value="P:chaperone-mediated protein folding"/>
    <property type="evidence" value="ECO:0007669"/>
    <property type="project" value="InterPro"/>
</dbReference>
<dbReference type="FunFam" id="3.10.50.40:FF:000006">
    <property type="entry name" value="Peptidyl-prolyl cis-trans isomerase"/>
    <property type="match status" value="1"/>
</dbReference>
<dbReference type="Gene3D" id="3.10.50.40">
    <property type="match status" value="1"/>
</dbReference>
<dbReference type="InterPro" id="IPR044609">
    <property type="entry name" value="FKBP2/11"/>
</dbReference>
<dbReference type="InterPro" id="IPR046357">
    <property type="entry name" value="PPIase_dom_sf"/>
</dbReference>
<dbReference type="InterPro" id="IPR001179">
    <property type="entry name" value="PPIase_FKBP_dom"/>
</dbReference>
<dbReference type="PANTHER" id="PTHR45779">
    <property type="entry name" value="PEPTIDYLPROLYL ISOMERASE"/>
    <property type="match status" value="1"/>
</dbReference>
<dbReference type="PANTHER" id="PTHR45779:SF7">
    <property type="entry name" value="PEPTIDYLPROLYL ISOMERASE"/>
    <property type="match status" value="1"/>
</dbReference>
<dbReference type="Pfam" id="PF00254">
    <property type="entry name" value="FKBP_C"/>
    <property type="match status" value="1"/>
</dbReference>
<dbReference type="SUPFAM" id="SSF54534">
    <property type="entry name" value="FKBP-like"/>
    <property type="match status" value="1"/>
</dbReference>
<dbReference type="PROSITE" id="PS50059">
    <property type="entry name" value="FKBP_PPIASE"/>
    <property type="match status" value="1"/>
</dbReference>
<comment type="function">
    <text evidence="1">PPIases accelerate the folding of proteins. It catalyzes the cis-trans isomerization of proline imidic peptide bonds in oligopeptides (By similarity).</text>
</comment>
<comment type="catalytic activity">
    <reaction>
        <text>[protein]-peptidylproline (omega=180) = [protein]-peptidylproline (omega=0)</text>
        <dbReference type="Rhea" id="RHEA:16237"/>
        <dbReference type="Rhea" id="RHEA-COMP:10747"/>
        <dbReference type="Rhea" id="RHEA-COMP:10748"/>
        <dbReference type="ChEBI" id="CHEBI:83833"/>
        <dbReference type="ChEBI" id="CHEBI:83834"/>
        <dbReference type="EC" id="5.2.1.8"/>
    </reaction>
</comment>
<comment type="activity regulation">
    <text evidence="1">Inhibited by both FK506 and rapamycin.</text>
</comment>
<comment type="subcellular location">
    <subcellularLocation>
        <location evidence="1">Endoplasmic reticulum</location>
    </subcellularLocation>
</comment>
<comment type="similarity">
    <text evidence="4">Belongs to the FKBP-type PPIase family. FKBP2 subfamily.</text>
</comment>
<proteinExistence type="inferred from homology"/>
<gene>
    <name type="primary">FPR2</name>
    <name type="ordered locus">CAGL0H01705g</name>
</gene>
<accession>Q6FSC1</accession>
<feature type="signal peptide" evidence="2">
    <location>
        <begin position="1"/>
        <end position="17"/>
    </location>
</feature>
<feature type="chain" id="PRO_0000233065" description="FK506-binding protein 2">
    <location>
        <begin position="18"/>
        <end position="136"/>
    </location>
</feature>
<feature type="domain" description="PPIase FKBP-type" evidence="3">
    <location>
        <begin position="45"/>
        <end position="134"/>
    </location>
</feature>
<keyword id="KW-0256">Endoplasmic reticulum</keyword>
<keyword id="KW-0413">Isomerase</keyword>
<keyword id="KW-1185">Reference proteome</keyword>
<keyword id="KW-0697">Rotamase</keyword>
<keyword id="KW-0732">Signal</keyword>
<organism>
    <name type="scientific">Candida glabrata (strain ATCC 2001 / BCRC 20586 / JCM 3761 / NBRC 0622 / NRRL Y-65 / CBS 138)</name>
    <name type="common">Yeast</name>
    <name type="synonym">Nakaseomyces glabratus</name>
    <dbReference type="NCBI Taxonomy" id="284593"/>
    <lineage>
        <taxon>Eukaryota</taxon>
        <taxon>Fungi</taxon>
        <taxon>Dikarya</taxon>
        <taxon>Ascomycota</taxon>
        <taxon>Saccharomycotina</taxon>
        <taxon>Saccharomycetes</taxon>
        <taxon>Saccharomycetales</taxon>
        <taxon>Saccharomycetaceae</taxon>
        <taxon>Nakaseomyces</taxon>
    </lineage>
</organism>
<name>FKBP2_CANGA</name>
<protein>
    <recommendedName>
        <fullName>FK506-binding protein 2</fullName>
        <ecNumber>5.2.1.8</ecNumber>
    </recommendedName>
    <alternativeName>
        <fullName>Peptidyl-prolyl cis-trans isomerase</fullName>
        <shortName>PPIase</shortName>
    </alternativeName>
    <alternativeName>
        <fullName>Rotamase</fullName>
    </alternativeName>
</protein>